<organism>
    <name type="scientific">Dictyostelium discoideum</name>
    <name type="common">Social amoeba</name>
    <dbReference type="NCBI Taxonomy" id="44689"/>
    <lineage>
        <taxon>Eukaryota</taxon>
        <taxon>Amoebozoa</taxon>
        <taxon>Evosea</taxon>
        <taxon>Eumycetozoa</taxon>
        <taxon>Dictyostelia</taxon>
        <taxon>Dictyosteliales</taxon>
        <taxon>Dictyosteliaceae</taxon>
        <taxon>Dictyostelium</taxon>
    </lineage>
</organism>
<proteinExistence type="inferred from homology"/>
<dbReference type="EMBL" id="AAFI02000042">
    <property type="protein sequence ID" value="EEU04103.1"/>
    <property type="molecule type" value="Genomic_DNA"/>
</dbReference>
<dbReference type="RefSeq" id="XP_002649155.1">
    <property type="nucleotide sequence ID" value="XM_002649109.1"/>
</dbReference>
<dbReference type="SMR" id="P0C7W4"/>
<dbReference type="FunCoup" id="P0C7W4">
    <property type="interactions" value="106"/>
</dbReference>
<dbReference type="STRING" id="44689.P0C7W4"/>
<dbReference type="PaxDb" id="44689-DDB0266899"/>
<dbReference type="EnsemblProtists" id="EEU04103">
    <property type="protein sequence ID" value="EEU04103"/>
    <property type="gene ID" value="DDB_G0295825"/>
</dbReference>
<dbReference type="GeneID" id="8623203"/>
<dbReference type="KEGG" id="ddi:DDB_G0295825"/>
<dbReference type="dictyBase" id="DDB_G0295825">
    <property type="gene designation" value="mrpl34"/>
</dbReference>
<dbReference type="VEuPathDB" id="AmoebaDB:DDB_G0295825"/>
<dbReference type="eggNOG" id="ENOG502SC40">
    <property type="taxonomic scope" value="Eukaryota"/>
</dbReference>
<dbReference type="HOGENOM" id="CLU_1581405_0_0_1"/>
<dbReference type="InParanoid" id="P0C7W4"/>
<dbReference type="OMA" id="VYECATK"/>
<dbReference type="PRO" id="PR:P0C7W4"/>
<dbReference type="Proteomes" id="UP000002195">
    <property type="component" value="Chromosome 3"/>
</dbReference>
<dbReference type="GO" id="GO:0005762">
    <property type="term" value="C:mitochondrial large ribosomal subunit"/>
    <property type="evidence" value="ECO:0000318"/>
    <property type="project" value="GO_Central"/>
</dbReference>
<dbReference type="GO" id="GO:0003735">
    <property type="term" value="F:structural constituent of ribosome"/>
    <property type="evidence" value="ECO:0007669"/>
    <property type="project" value="InterPro"/>
</dbReference>
<dbReference type="GO" id="GO:0006412">
    <property type="term" value="P:translation"/>
    <property type="evidence" value="ECO:0007669"/>
    <property type="project" value="InterPro"/>
</dbReference>
<dbReference type="FunFam" id="1.10.287.3980:FF:000001">
    <property type="entry name" value="Mitochondrial ribosomal protein L34"/>
    <property type="match status" value="1"/>
</dbReference>
<dbReference type="Gene3D" id="1.10.287.3980">
    <property type="match status" value="1"/>
</dbReference>
<dbReference type="HAMAP" id="MF_00391">
    <property type="entry name" value="Ribosomal_bL34"/>
    <property type="match status" value="1"/>
</dbReference>
<dbReference type="InterPro" id="IPR000271">
    <property type="entry name" value="Ribosomal_bL34"/>
</dbReference>
<dbReference type="InterPro" id="IPR020939">
    <property type="entry name" value="Ribosomal_bL34_CS"/>
</dbReference>
<dbReference type="NCBIfam" id="TIGR01030">
    <property type="entry name" value="rpmH_bact"/>
    <property type="match status" value="1"/>
</dbReference>
<dbReference type="PANTHER" id="PTHR14503:SF4">
    <property type="entry name" value="LARGE RIBOSOMAL SUBUNIT PROTEIN BL34M"/>
    <property type="match status" value="1"/>
</dbReference>
<dbReference type="PANTHER" id="PTHR14503">
    <property type="entry name" value="MITOCHONDRIAL RIBOSOMAL PROTEIN 34 FAMILY MEMBER"/>
    <property type="match status" value="1"/>
</dbReference>
<dbReference type="Pfam" id="PF00468">
    <property type="entry name" value="Ribosomal_L34"/>
    <property type="match status" value="1"/>
</dbReference>
<dbReference type="PROSITE" id="PS00784">
    <property type="entry name" value="RIBOSOMAL_L34"/>
    <property type="match status" value="1"/>
</dbReference>
<gene>
    <name type="primary">mrpl34</name>
    <name type="ORF">DDB_G0295825</name>
</gene>
<evidence type="ECO:0000255" key="1"/>
<evidence type="ECO:0000305" key="2"/>
<accession>P0C7W4</accession>
<accession>C7G019</accession>
<accession>Q54TJ8</accession>
<reference key="1">
    <citation type="journal article" date="2005" name="Nature">
        <title>The genome of the social amoeba Dictyostelium discoideum.</title>
        <authorList>
            <person name="Eichinger L."/>
            <person name="Pachebat J.A."/>
            <person name="Gloeckner G."/>
            <person name="Rajandream M.A."/>
            <person name="Sucgang R."/>
            <person name="Berriman M."/>
            <person name="Song J."/>
            <person name="Olsen R."/>
            <person name="Szafranski K."/>
            <person name="Xu Q."/>
            <person name="Tunggal B."/>
            <person name="Kummerfeld S."/>
            <person name="Madera M."/>
            <person name="Konfortov B.A."/>
            <person name="Rivero F."/>
            <person name="Bankier A.T."/>
            <person name="Lehmann R."/>
            <person name="Hamlin N."/>
            <person name="Davies R."/>
            <person name="Gaudet P."/>
            <person name="Fey P."/>
            <person name="Pilcher K."/>
            <person name="Chen G."/>
            <person name="Saunders D."/>
            <person name="Sodergren E.J."/>
            <person name="Davis P."/>
            <person name="Kerhornou A."/>
            <person name="Nie X."/>
            <person name="Hall N."/>
            <person name="Anjard C."/>
            <person name="Hemphill L."/>
            <person name="Bason N."/>
            <person name="Farbrother P."/>
            <person name="Desany B."/>
            <person name="Just E."/>
            <person name="Morio T."/>
            <person name="Rost R."/>
            <person name="Churcher C.M."/>
            <person name="Cooper J."/>
            <person name="Haydock S."/>
            <person name="van Driessche N."/>
            <person name="Cronin A."/>
            <person name="Goodhead I."/>
            <person name="Muzny D.M."/>
            <person name="Mourier T."/>
            <person name="Pain A."/>
            <person name="Lu M."/>
            <person name="Harper D."/>
            <person name="Lindsay R."/>
            <person name="Hauser H."/>
            <person name="James K.D."/>
            <person name="Quiles M."/>
            <person name="Madan Babu M."/>
            <person name="Saito T."/>
            <person name="Buchrieser C."/>
            <person name="Wardroper A."/>
            <person name="Felder M."/>
            <person name="Thangavelu M."/>
            <person name="Johnson D."/>
            <person name="Knights A."/>
            <person name="Loulseged H."/>
            <person name="Mungall K.L."/>
            <person name="Oliver K."/>
            <person name="Price C."/>
            <person name="Quail M.A."/>
            <person name="Urushihara H."/>
            <person name="Hernandez J."/>
            <person name="Rabbinowitsch E."/>
            <person name="Steffen D."/>
            <person name="Sanders M."/>
            <person name="Ma J."/>
            <person name="Kohara Y."/>
            <person name="Sharp S."/>
            <person name="Simmonds M.N."/>
            <person name="Spiegler S."/>
            <person name="Tivey A."/>
            <person name="Sugano S."/>
            <person name="White B."/>
            <person name="Walker D."/>
            <person name="Woodward J.R."/>
            <person name="Winckler T."/>
            <person name="Tanaka Y."/>
            <person name="Shaulsky G."/>
            <person name="Schleicher M."/>
            <person name="Weinstock G.M."/>
            <person name="Rosenthal A."/>
            <person name="Cox E.C."/>
            <person name="Chisholm R.L."/>
            <person name="Gibbs R.A."/>
            <person name="Loomis W.F."/>
            <person name="Platzer M."/>
            <person name="Kay R.R."/>
            <person name="Williams J.G."/>
            <person name="Dear P.H."/>
            <person name="Noegel A.A."/>
            <person name="Barrell B.G."/>
            <person name="Kuspa A."/>
        </authorList>
    </citation>
    <scope>NUCLEOTIDE SEQUENCE [LARGE SCALE GENOMIC DNA]</scope>
    <source>
        <strain>AX4</strain>
    </source>
</reference>
<comment type="subcellular location">
    <subcellularLocation>
        <location evidence="2">Mitochondrion</location>
    </subcellularLocation>
</comment>
<comment type="similarity">
    <text evidence="2">Belongs to the bacterial ribosomal protein bL34 family.</text>
</comment>
<feature type="transit peptide" description="Mitochondrion" evidence="1">
    <location>
        <begin position="1"/>
        <end status="unknown"/>
    </location>
</feature>
<feature type="chain" id="PRO_0000344507" description="Large ribosomal subunit protein bL34m">
    <location>
        <begin status="unknown"/>
        <end position="169"/>
    </location>
</feature>
<name>RM34_DICDI</name>
<keyword id="KW-0496">Mitochondrion</keyword>
<keyword id="KW-1185">Reference proteome</keyword>
<keyword id="KW-0687">Ribonucleoprotein</keyword>
<keyword id="KW-0689">Ribosomal protein</keyword>
<keyword id="KW-0809">Transit peptide</keyword>
<sequence>MFSSCRYLLNRLPNSFSSGMINKNFNPLLYTNKSNAIFENRSPINILNVNNNKQYFNFEKPIEISENIDIKYYDNNTMDDISVGPSPFEIDPLVFSLKPSIINENIINEINIVEESELNENTYELLKRTYQPSVLVRKRRHGFLKRMSTVGGRRIIKERIARGRRLNSA</sequence>
<protein>
    <recommendedName>
        <fullName evidence="2">Large ribosomal subunit protein bL34m</fullName>
    </recommendedName>
    <alternativeName>
        <fullName>39S ribosomal protein L34, mitochondrial</fullName>
        <shortName>L34mt</shortName>
        <shortName>MRP-L34</shortName>
    </alternativeName>
</protein>